<dbReference type="EC" id="2.3.1.15" evidence="1"/>
<dbReference type="EMBL" id="CP000388">
    <property type="protein sequence ID" value="ABG42747.1"/>
    <property type="molecule type" value="Genomic_DNA"/>
</dbReference>
<dbReference type="RefSeq" id="WP_011576933.1">
    <property type="nucleotide sequence ID" value="NC_008228.1"/>
</dbReference>
<dbReference type="SMR" id="Q15MZ1"/>
<dbReference type="STRING" id="342610.Patl_4248"/>
<dbReference type="KEGG" id="pat:Patl_4248"/>
<dbReference type="eggNOG" id="COG2937">
    <property type="taxonomic scope" value="Bacteria"/>
</dbReference>
<dbReference type="HOGENOM" id="CLU_015407_0_0_6"/>
<dbReference type="OrthoDB" id="335193at2"/>
<dbReference type="UniPathway" id="UPA00557">
    <property type="reaction ID" value="UER00612"/>
</dbReference>
<dbReference type="Proteomes" id="UP000001981">
    <property type="component" value="Chromosome"/>
</dbReference>
<dbReference type="GO" id="GO:0005886">
    <property type="term" value="C:plasma membrane"/>
    <property type="evidence" value="ECO:0007669"/>
    <property type="project" value="UniProtKB-SubCell"/>
</dbReference>
<dbReference type="GO" id="GO:0004366">
    <property type="term" value="F:glycerol-3-phosphate O-acyltransferase activity"/>
    <property type="evidence" value="ECO:0007669"/>
    <property type="project" value="UniProtKB-UniRule"/>
</dbReference>
<dbReference type="GO" id="GO:0016024">
    <property type="term" value="P:CDP-diacylglycerol biosynthetic process"/>
    <property type="evidence" value="ECO:0007669"/>
    <property type="project" value="UniProtKB-UniRule"/>
</dbReference>
<dbReference type="GO" id="GO:0006631">
    <property type="term" value="P:fatty acid metabolic process"/>
    <property type="evidence" value="ECO:0007669"/>
    <property type="project" value="TreeGrafter"/>
</dbReference>
<dbReference type="CDD" id="cd07993">
    <property type="entry name" value="LPLAT_DHAPAT-like"/>
    <property type="match status" value="1"/>
</dbReference>
<dbReference type="HAMAP" id="MF_00393">
    <property type="entry name" value="Glyc3P_acyltrans"/>
    <property type="match status" value="1"/>
</dbReference>
<dbReference type="InterPro" id="IPR022284">
    <property type="entry name" value="GPAT/DHAPAT"/>
</dbReference>
<dbReference type="InterPro" id="IPR045520">
    <property type="entry name" value="GPAT/DHAPAT_C"/>
</dbReference>
<dbReference type="InterPro" id="IPR041728">
    <property type="entry name" value="GPAT/DHAPAT_LPLAT"/>
</dbReference>
<dbReference type="InterPro" id="IPR028354">
    <property type="entry name" value="GPAT_PlsB"/>
</dbReference>
<dbReference type="InterPro" id="IPR002123">
    <property type="entry name" value="Plipid/glycerol_acylTrfase"/>
</dbReference>
<dbReference type="NCBIfam" id="TIGR03703">
    <property type="entry name" value="plsB"/>
    <property type="match status" value="1"/>
</dbReference>
<dbReference type="NCBIfam" id="NF003441">
    <property type="entry name" value="PRK04974.1"/>
    <property type="match status" value="1"/>
</dbReference>
<dbReference type="PANTHER" id="PTHR12563:SF17">
    <property type="entry name" value="DIHYDROXYACETONE PHOSPHATE ACYLTRANSFERASE"/>
    <property type="match status" value="1"/>
</dbReference>
<dbReference type="PANTHER" id="PTHR12563">
    <property type="entry name" value="GLYCEROL-3-PHOSPHATE ACYLTRANSFERASE"/>
    <property type="match status" value="1"/>
</dbReference>
<dbReference type="Pfam" id="PF01553">
    <property type="entry name" value="Acyltransferase"/>
    <property type="match status" value="1"/>
</dbReference>
<dbReference type="Pfam" id="PF19277">
    <property type="entry name" value="GPAT_C"/>
    <property type="match status" value="1"/>
</dbReference>
<dbReference type="PIRSF" id="PIRSF500064">
    <property type="entry name" value="GPAT"/>
    <property type="match status" value="1"/>
</dbReference>
<dbReference type="PIRSF" id="PIRSF000437">
    <property type="entry name" value="GPAT_DHAPAT"/>
    <property type="match status" value="1"/>
</dbReference>
<dbReference type="SMART" id="SM00563">
    <property type="entry name" value="PlsC"/>
    <property type="match status" value="1"/>
</dbReference>
<dbReference type="SUPFAM" id="SSF69593">
    <property type="entry name" value="Glycerol-3-phosphate (1)-acyltransferase"/>
    <property type="match status" value="1"/>
</dbReference>
<proteinExistence type="inferred from homology"/>
<organism>
    <name type="scientific">Pseudoalteromonas atlantica (strain T6c / ATCC BAA-1087)</name>
    <dbReference type="NCBI Taxonomy" id="3042615"/>
    <lineage>
        <taxon>Bacteria</taxon>
        <taxon>Pseudomonadati</taxon>
        <taxon>Pseudomonadota</taxon>
        <taxon>Gammaproteobacteria</taxon>
        <taxon>Alteromonadales</taxon>
        <taxon>Alteromonadaceae</taxon>
        <taxon>Paraglaciecola</taxon>
    </lineage>
</organism>
<evidence type="ECO:0000255" key="1">
    <source>
        <dbReference type="HAMAP-Rule" id="MF_00393"/>
    </source>
</evidence>
<sequence>MAWLHKLLLTMISVPLKWLVKVNSIPTDIATELGIDNTKPIIYLLRTHSVTDQFALKMSTNSLGLPKPSEPVQIGGKELPACLFLQQPRSLLTRKVKITKIADDVTRLFQLHREHPELDLQIVPVSIFWGRAPGRKLSGWSDIIANQVSPNWLRKFFIVLFLGRDNFVCYSKAVSSRTMADLKGSDEEIGHKLIRLAGTHFHRRRQNLIGPMLLERQELYNAVLGADSVRQAVSDEARSKKQSNHQIQAKAKKYVDEIAADYREGLVRIGDRLLTKIWNKVYNGIEVKHADKVRALAQNGHEIIYVPCHRSHMDYLLLTYVIYHEGLVTPHIAAGINLNFWPIGGILRKCGAFFLRRSFAGNKLYTAVFREYLELLFNKGYSVKYYPEGGRSRTGRLLPPKTGMLAMTLQGLIKGINRPVSIVPVYIGYEHVMEVSSYLKELKGTDKKKESFFQVFSAVRKLKNYGNGFLNFGDPINLSNFLDSEVPDWREAQNLEPDKKPRWLTPAVNTLANDVMGRINQAAAVSGMSLCAMCLLSAKKHAMAQDELERAIDDYLDLLKAAPYSDLSSIPELDGKALVENTLKLNKLEVSQDSFGTIISLKRKNAVALTYYRNNILHLFALPGLVSAIVFAHKGLARPQVISLVGQLYPLLQRELFIYMSHEEAMNYTDRLLSTMIDIGLLRAEDDTLCPPAATSKAFYSFWLLNRSIQETLQRYAAVLTILKKEQTIGRGRLEKQSREFAERLAALHGINSPEFFDKNVLSTFIHALKDNELINASSEGQLQHSDTSEALLASVEELISPEITQRLQQI</sequence>
<gene>
    <name evidence="1" type="primary">plsB</name>
    <name type="ordered locus">Patl_4248</name>
</gene>
<keyword id="KW-0012">Acyltransferase</keyword>
<keyword id="KW-0997">Cell inner membrane</keyword>
<keyword id="KW-1003">Cell membrane</keyword>
<keyword id="KW-0444">Lipid biosynthesis</keyword>
<keyword id="KW-0443">Lipid metabolism</keyword>
<keyword id="KW-0472">Membrane</keyword>
<keyword id="KW-0594">Phospholipid biosynthesis</keyword>
<keyword id="KW-1208">Phospholipid metabolism</keyword>
<keyword id="KW-0808">Transferase</keyword>
<comment type="catalytic activity">
    <reaction evidence="1">
        <text>sn-glycerol 3-phosphate + an acyl-CoA = a 1-acyl-sn-glycero-3-phosphate + CoA</text>
        <dbReference type="Rhea" id="RHEA:15325"/>
        <dbReference type="ChEBI" id="CHEBI:57287"/>
        <dbReference type="ChEBI" id="CHEBI:57597"/>
        <dbReference type="ChEBI" id="CHEBI:57970"/>
        <dbReference type="ChEBI" id="CHEBI:58342"/>
        <dbReference type="EC" id="2.3.1.15"/>
    </reaction>
</comment>
<comment type="pathway">
    <text evidence="1">Phospholipid metabolism; CDP-diacylglycerol biosynthesis; CDP-diacylglycerol from sn-glycerol 3-phosphate: step 1/3.</text>
</comment>
<comment type="subcellular location">
    <subcellularLocation>
        <location evidence="1">Cell inner membrane</location>
        <topology evidence="1">Peripheral membrane protein</topology>
        <orientation evidence="1">Cytoplasmic side</orientation>
    </subcellularLocation>
</comment>
<comment type="domain">
    <text evidence="1">The HXXXXD motif is essential for acyltransferase activity and may constitute the binding site for the phosphate moiety of the glycerol-3-phosphate.</text>
</comment>
<comment type="similarity">
    <text evidence="1">Belongs to the GPAT/DAPAT family.</text>
</comment>
<reference key="1">
    <citation type="submission" date="2006-06" db="EMBL/GenBank/DDBJ databases">
        <title>Complete sequence of Pseudoalteromonas atlantica T6c.</title>
        <authorList>
            <consortium name="US DOE Joint Genome Institute"/>
            <person name="Copeland A."/>
            <person name="Lucas S."/>
            <person name="Lapidus A."/>
            <person name="Barry K."/>
            <person name="Detter J.C."/>
            <person name="Glavina del Rio T."/>
            <person name="Hammon N."/>
            <person name="Israni S."/>
            <person name="Dalin E."/>
            <person name="Tice H."/>
            <person name="Pitluck S."/>
            <person name="Saunders E."/>
            <person name="Brettin T."/>
            <person name="Bruce D."/>
            <person name="Han C."/>
            <person name="Tapia R."/>
            <person name="Gilna P."/>
            <person name="Schmutz J."/>
            <person name="Larimer F."/>
            <person name="Land M."/>
            <person name="Hauser L."/>
            <person name="Kyrpides N."/>
            <person name="Kim E."/>
            <person name="Karls A.C."/>
            <person name="Bartlett D."/>
            <person name="Higgins B.P."/>
            <person name="Richardson P."/>
        </authorList>
    </citation>
    <scope>NUCLEOTIDE SEQUENCE [LARGE SCALE GENOMIC DNA]</scope>
    <source>
        <strain>T6c / ATCC BAA-1087</strain>
    </source>
</reference>
<accession>Q15MZ1</accession>
<feature type="chain" id="PRO_1000049441" description="Glycerol-3-phosphate acyltransferase">
    <location>
        <begin position="1"/>
        <end position="811"/>
    </location>
</feature>
<feature type="short sequence motif" description="HXXXXD motif">
    <location>
        <begin position="308"/>
        <end position="313"/>
    </location>
</feature>
<protein>
    <recommendedName>
        <fullName evidence="1">Glycerol-3-phosphate acyltransferase</fullName>
        <shortName evidence="1">GPAT</shortName>
        <ecNumber evidence="1">2.3.1.15</ecNumber>
    </recommendedName>
</protein>
<name>PLSB_PSEA6</name>